<name>LAP4A_CHICK</name>
<keyword id="KW-0472">Membrane</keyword>
<keyword id="KW-1185">Reference proteome</keyword>
<keyword id="KW-0812">Transmembrane</keyword>
<keyword id="KW-1133">Transmembrane helix</keyword>
<keyword id="KW-0813">Transport</keyword>
<proteinExistence type="evidence at transcript level"/>
<evidence type="ECO:0000250" key="1"/>
<evidence type="ECO:0000255" key="2"/>
<evidence type="ECO:0000305" key="3"/>
<feature type="chain" id="PRO_0000249718" description="Lysosomal-associated transmembrane protein 4A">
    <location>
        <begin position="1"/>
        <end position="229"/>
    </location>
</feature>
<feature type="transmembrane region" description="Helical" evidence="2">
    <location>
        <begin position="25"/>
        <end position="45"/>
    </location>
</feature>
<feature type="transmembrane region" description="Helical" evidence="2">
    <location>
        <begin position="78"/>
        <end position="98"/>
    </location>
</feature>
<feature type="transmembrane region" description="Helical" evidence="2">
    <location>
        <begin position="104"/>
        <end position="124"/>
    </location>
</feature>
<feature type="transmembrane region" description="Helical" evidence="2">
    <location>
        <begin position="156"/>
        <end position="176"/>
    </location>
</feature>
<organism>
    <name type="scientific">Gallus gallus</name>
    <name type="common">Chicken</name>
    <dbReference type="NCBI Taxonomy" id="9031"/>
    <lineage>
        <taxon>Eukaryota</taxon>
        <taxon>Metazoa</taxon>
        <taxon>Chordata</taxon>
        <taxon>Craniata</taxon>
        <taxon>Vertebrata</taxon>
        <taxon>Euteleostomi</taxon>
        <taxon>Archelosauria</taxon>
        <taxon>Archosauria</taxon>
        <taxon>Dinosauria</taxon>
        <taxon>Saurischia</taxon>
        <taxon>Theropoda</taxon>
        <taxon>Coelurosauria</taxon>
        <taxon>Aves</taxon>
        <taxon>Neognathae</taxon>
        <taxon>Galloanserae</taxon>
        <taxon>Galliformes</taxon>
        <taxon>Phasianidae</taxon>
        <taxon>Phasianinae</taxon>
        <taxon>Gallus</taxon>
    </lineage>
</organism>
<gene>
    <name type="primary">LAPTM4A</name>
    <name type="ORF">RCJMB04_1k20</name>
</gene>
<comment type="function">
    <text evidence="1">May function in the transport of nucleosides and/or nucleoside derivatives between the cytosol and the lumen of an intracellular membrane-bound compartment.</text>
</comment>
<comment type="subcellular location">
    <subcellularLocation>
        <location evidence="3">Endomembrane system</location>
        <topology evidence="3">Multi-pass membrane protein</topology>
    </subcellularLocation>
    <text evidence="3">May reside in an intracellular membrane-bound compartment.</text>
</comment>
<comment type="domain">
    <text evidence="1">The C-terminal domain is necessary for retention within intracellular membranes.</text>
</comment>
<comment type="similarity">
    <text evidence="3">Belongs to the LAPTM4/LAPTM5 transporter family.</text>
</comment>
<accession>Q5ZML7</accession>
<dbReference type="EMBL" id="AJ719367">
    <property type="protein sequence ID" value="CAG31026.1"/>
    <property type="molecule type" value="mRNA"/>
</dbReference>
<dbReference type="RefSeq" id="NP_001026263.1">
    <property type="nucleotide sequence ID" value="NM_001031092.1"/>
</dbReference>
<dbReference type="SMR" id="Q5ZML7"/>
<dbReference type="FunCoup" id="Q5ZML7">
    <property type="interactions" value="2180"/>
</dbReference>
<dbReference type="STRING" id="9031.ENSGALP00000026537"/>
<dbReference type="PaxDb" id="9031-ENSGALP00000026537"/>
<dbReference type="GeneID" id="421959"/>
<dbReference type="KEGG" id="gga:421959"/>
<dbReference type="CTD" id="9741"/>
<dbReference type="VEuPathDB" id="HostDB:geneid_421959"/>
<dbReference type="eggNOG" id="ENOG502QSAX">
    <property type="taxonomic scope" value="Eukaryota"/>
</dbReference>
<dbReference type="InParanoid" id="Q5ZML7"/>
<dbReference type="OrthoDB" id="10002163at2759"/>
<dbReference type="PhylomeDB" id="Q5ZML7"/>
<dbReference type="PRO" id="PR:Q5ZML7"/>
<dbReference type="Proteomes" id="UP000000539">
    <property type="component" value="Unassembled WGS sequence"/>
</dbReference>
<dbReference type="GO" id="GO:0012505">
    <property type="term" value="C:endomembrane system"/>
    <property type="evidence" value="ECO:0007669"/>
    <property type="project" value="UniProtKB-SubCell"/>
</dbReference>
<dbReference type="GO" id="GO:0005765">
    <property type="term" value="C:lysosomal membrane"/>
    <property type="evidence" value="ECO:0000318"/>
    <property type="project" value="GO_Central"/>
</dbReference>
<dbReference type="InterPro" id="IPR004687">
    <property type="entry name" value="LAPTM4/5"/>
</dbReference>
<dbReference type="InterPro" id="IPR018396">
    <property type="entry name" value="LAPTM_4A/5"/>
</dbReference>
<dbReference type="InterPro" id="IPR051115">
    <property type="entry name" value="LAPTM_transporter"/>
</dbReference>
<dbReference type="NCBIfam" id="TIGR00799">
    <property type="entry name" value="mtp"/>
    <property type="match status" value="1"/>
</dbReference>
<dbReference type="PANTHER" id="PTHR12479">
    <property type="entry name" value="LYSOSOMAL-ASSOCIATED TRANSMEMBRANE PROTEIN"/>
    <property type="match status" value="1"/>
</dbReference>
<dbReference type="PANTHER" id="PTHR12479:SF5">
    <property type="entry name" value="LYSOSOMAL-ASSOCIATED TRANSMEMBRANE PROTEIN 4A"/>
    <property type="match status" value="1"/>
</dbReference>
<dbReference type="Pfam" id="PF03821">
    <property type="entry name" value="Mtp"/>
    <property type="match status" value="2"/>
</dbReference>
<protein>
    <recommendedName>
        <fullName>Lysosomal-associated transmembrane protein 4A</fullName>
    </recommendedName>
</protein>
<reference key="1">
    <citation type="journal article" date="2005" name="Genome Biol.">
        <title>Full-length cDNAs from chicken bursal lymphocytes to facilitate gene function analysis.</title>
        <authorList>
            <person name="Caldwell R.B."/>
            <person name="Kierzek A.M."/>
            <person name="Arakawa H."/>
            <person name="Bezzubov Y."/>
            <person name="Zaim J."/>
            <person name="Fiedler P."/>
            <person name="Kutter S."/>
            <person name="Blagodatski A."/>
            <person name="Kostovska D."/>
            <person name="Koter M."/>
            <person name="Plachy J."/>
            <person name="Carninci P."/>
            <person name="Hayashizaki Y."/>
            <person name="Buerstedde J.-M."/>
        </authorList>
    </citation>
    <scope>NUCLEOTIDE SEQUENCE [LARGE SCALE MRNA]</scope>
    <source>
        <strain>CB</strain>
        <tissue>Bursa of Fabricius</tissue>
    </source>
</reference>
<sequence length="229" mass="26274">MTFKRSRDRFYSTRCCGCCHVRTGTIILGTWYMVVNLLMGILLTVEVTHPNVVPTVNIQYEVIGNYYASERMAENACVLFAISLLMFTISAMMVYGAIAHRVGWLIPFFCYQLFDFVVSCLVAISSLTYLPRIKDYLDQLPDFPYKDDLLSLDSSCLLFIVLVFFALFIILKAYLINCVWNCYKYISNRNLPEIAVYPAFEAPPQYVLPTYEMAVKMPEKEPSPSYIPA</sequence>